<organism>
    <name type="scientific">Anaplasma marginale (strain Florida)</name>
    <dbReference type="NCBI Taxonomy" id="320483"/>
    <lineage>
        <taxon>Bacteria</taxon>
        <taxon>Pseudomonadati</taxon>
        <taxon>Pseudomonadota</taxon>
        <taxon>Alphaproteobacteria</taxon>
        <taxon>Rickettsiales</taxon>
        <taxon>Anaplasmataceae</taxon>
        <taxon>Anaplasma</taxon>
    </lineage>
</organism>
<feature type="chain" id="PRO_1000166161" description="Large ribosomal subunit protein bL25">
    <location>
        <begin position="1"/>
        <end position="218"/>
    </location>
</feature>
<feature type="region of interest" description="Disordered" evidence="2">
    <location>
        <begin position="187"/>
        <end position="218"/>
    </location>
</feature>
<feature type="compositionally biased region" description="Low complexity" evidence="2">
    <location>
        <begin position="202"/>
        <end position="218"/>
    </location>
</feature>
<gene>
    <name evidence="1" type="primary">rplY</name>
    <name evidence="1" type="synonym">ctc</name>
    <name type="ordered locus">AMF_1016</name>
</gene>
<comment type="function">
    <text evidence="1">This is one of the proteins that binds to the 5S RNA in the ribosome where it forms part of the central protuberance.</text>
</comment>
<comment type="subunit">
    <text evidence="1">Part of the 50S ribosomal subunit; part of the 5S rRNA/L5/L18/L25 subcomplex. Contacts the 5S rRNA. Binds to the 5S rRNA independently of L5 and L18.</text>
</comment>
<comment type="similarity">
    <text evidence="1">Belongs to the bacterial ribosomal protein bL25 family. CTC subfamily.</text>
</comment>
<dbReference type="EMBL" id="CP001079">
    <property type="protein sequence ID" value="ACM49831.1"/>
    <property type="molecule type" value="Genomic_DNA"/>
</dbReference>
<dbReference type="RefSeq" id="WP_012659158.1">
    <property type="nucleotide sequence ID" value="NZ_AFMS01000085.1"/>
</dbReference>
<dbReference type="SMR" id="B9KHC7"/>
<dbReference type="STRING" id="320483.AMF_1016"/>
<dbReference type="GeneID" id="7398209"/>
<dbReference type="KEGG" id="amf:AMF_1016"/>
<dbReference type="PATRIC" id="fig|320483.3.peg.1160"/>
<dbReference type="eggNOG" id="COG1825">
    <property type="taxonomic scope" value="Bacteria"/>
</dbReference>
<dbReference type="HOGENOM" id="CLU_075939_0_1_5"/>
<dbReference type="Proteomes" id="UP000007307">
    <property type="component" value="Chromosome"/>
</dbReference>
<dbReference type="GO" id="GO:0022625">
    <property type="term" value="C:cytosolic large ribosomal subunit"/>
    <property type="evidence" value="ECO:0007669"/>
    <property type="project" value="TreeGrafter"/>
</dbReference>
<dbReference type="GO" id="GO:0008097">
    <property type="term" value="F:5S rRNA binding"/>
    <property type="evidence" value="ECO:0007669"/>
    <property type="project" value="InterPro"/>
</dbReference>
<dbReference type="GO" id="GO:0003735">
    <property type="term" value="F:structural constituent of ribosome"/>
    <property type="evidence" value="ECO:0007669"/>
    <property type="project" value="InterPro"/>
</dbReference>
<dbReference type="GO" id="GO:0006412">
    <property type="term" value="P:translation"/>
    <property type="evidence" value="ECO:0007669"/>
    <property type="project" value="UniProtKB-UniRule"/>
</dbReference>
<dbReference type="CDD" id="cd00495">
    <property type="entry name" value="Ribosomal_L25_TL5_CTC"/>
    <property type="match status" value="1"/>
</dbReference>
<dbReference type="Gene3D" id="2.170.120.20">
    <property type="entry name" value="Ribosomal protein L25, beta domain"/>
    <property type="match status" value="1"/>
</dbReference>
<dbReference type="Gene3D" id="2.40.240.10">
    <property type="entry name" value="Ribosomal Protein L25, Chain P"/>
    <property type="match status" value="1"/>
</dbReference>
<dbReference type="HAMAP" id="MF_01334">
    <property type="entry name" value="Ribosomal_bL25_CTC"/>
    <property type="match status" value="1"/>
</dbReference>
<dbReference type="InterPro" id="IPR020056">
    <property type="entry name" value="Rbsml_bL25/Gln-tRNA_synth_N"/>
</dbReference>
<dbReference type="InterPro" id="IPR011035">
    <property type="entry name" value="Ribosomal_bL25/Gln-tRNA_synth"/>
</dbReference>
<dbReference type="InterPro" id="IPR020057">
    <property type="entry name" value="Ribosomal_bL25_b-dom"/>
</dbReference>
<dbReference type="InterPro" id="IPR037121">
    <property type="entry name" value="Ribosomal_bL25_C"/>
</dbReference>
<dbReference type="InterPro" id="IPR001021">
    <property type="entry name" value="Ribosomal_bL25_long"/>
</dbReference>
<dbReference type="InterPro" id="IPR029751">
    <property type="entry name" value="Ribosomal_L25_dom"/>
</dbReference>
<dbReference type="InterPro" id="IPR020930">
    <property type="entry name" value="Ribosomal_uL5_bac-type"/>
</dbReference>
<dbReference type="NCBIfam" id="TIGR00731">
    <property type="entry name" value="bL25_bact_ctc"/>
    <property type="match status" value="1"/>
</dbReference>
<dbReference type="NCBIfam" id="NF004128">
    <property type="entry name" value="PRK05618.1-2"/>
    <property type="match status" value="1"/>
</dbReference>
<dbReference type="NCBIfam" id="NF004612">
    <property type="entry name" value="PRK05943.1"/>
    <property type="match status" value="1"/>
</dbReference>
<dbReference type="PANTHER" id="PTHR33284">
    <property type="entry name" value="RIBOSOMAL PROTEIN L25/GLN-TRNA SYNTHETASE, ANTI-CODON-BINDING DOMAIN-CONTAINING PROTEIN"/>
    <property type="match status" value="1"/>
</dbReference>
<dbReference type="PANTHER" id="PTHR33284:SF1">
    <property type="entry name" value="RIBOSOMAL PROTEIN L25_GLN-TRNA SYNTHETASE, ANTI-CODON-BINDING DOMAIN-CONTAINING PROTEIN"/>
    <property type="match status" value="1"/>
</dbReference>
<dbReference type="Pfam" id="PF01386">
    <property type="entry name" value="Ribosomal_L25p"/>
    <property type="match status" value="1"/>
</dbReference>
<dbReference type="Pfam" id="PF14693">
    <property type="entry name" value="Ribosomal_TL5_C"/>
    <property type="match status" value="1"/>
</dbReference>
<dbReference type="SUPFAM" id="SSF50715">
    <property type="entry name" value="Ribosomal protein L25-like"/>
    <property type="match status" value="1"/>
</dbReference>
<keyword id="KW-1185">Reference proteome</keyword>
<keyword id="KW-0687">Ribonucleoprotein</keyword>
<keyword id="KW-0689">Ribosomal protein</keyword>
<keyword id="KW-0694">RNA-binding</keyword>
<keyword id="KW-0699">rRNA-binding</keyword>
<reference key="1">
    <citation type="journal article" date="2009" name="BMC Genomics">
        <title>Conservation in the face of diversity: multistrain analysis of an intracellular bacterium.</title>
        <authorList>
            <person name="Dark M.J."/>
            <person name="Herndon D.R."/>
            <person name="Kappmeyer L.S."/>
            <person name="Gonzales M.P."/>
            <person name="Nordeen E."/>
            <person name="Palmer G.H."/>
            <person name="Knowles D.P. Jr."/>
            <person name="Brayton K.A."/>
        </authorList>
    </citation>
    <scope>NUCLEOTIDE SEQUENCE [LARGE SCALE GENOMIC DNA]</scope>
    <source>
        <strain>Florida</strain>
    </source>
</reference>
<protein>
    <recommendedName>
        <fullName evidence="1">Large ribosomal subunit protein bL25</fullName>
    </recommendedName>
    <alternativeName>
        <fullName evidence="3">50S ribosomal protein L25</fullName>
    </alternativeName>
    <alternativeName>
        <fullName evidence="1">General stress protein CTC</fullName>
    </alternativeName>
</protein>
<evidence type="ECO:0000255" key="1">
    <source>
        <dbReference type="HAMAP-Rule" id="MF_01334"/>
    </source>
</evidence>
<evidence type="ECO:0000256" key="2">
    <source>
        <dbReference type="SAM" id="MobiDB-lite"/>
    </source>
</evidence>
<evidence type="ECO:0000305" key="3"/>
<accession>B9KHC7</accession>
<proteinExistence type="inferred from homology"/>
<sequence>MSHGDTIRVDASVRAKCGTGSARALRAAGLIPAVVYGKNRDAVNISLSHADFLKKCRTLPIFSQLIKLCIDGKEEFALTKEIQKHPVSGAVSHVDFQFVDRGAEIKVEVPLVFLNEQKCAGVKLGGALNILHRSLLIRCAPDAIPQSLEVDLLDLAIGHSIHVSDLALPETMQVAMKEENPVVASVSATAAVEEAKEDGAPEESAQGQGAAEAQETGK</sequence>
<name>RL25_ANAMF</name>